<sequence>MSGSTGERSFADIITSIRYWVIHSITIPSLFIAGWLFVSTGLAYDVFGSPRPNEYFTESRQGIPLITGRFDSLEQLDEFSRSF</sequence>
<organism>
    <name type="scientific">Arabidopsis thaliana</name>
    <name type="common">Mouse-ear cress</name>
    <dbReference type="NCBI Taxonomy" id="3702"/>
    <lineage>
        <taxon>Eukaryota</taxon>
        <taxon>Viridiplantae</taxon>
        <taxon>Streptophyta</taxon>
        <taxon>Embryophyta</taxon>
        <taxon>Tracheophyta</taxon>
        <taxon>Spermatophyta</taxon>
        <taxon>Magnoliopsida</taxon>
        <taxon>eudicotyledons</taxon>
        <taxon>Gunneridae</taxon>
        <taxon>Pentapetalae</taxon>
        <taxon>rosids</taxon>
        <taxon>malvids</taxon>
        <taxon>Brassicales</taxon>
        <taxon>Brassicaceae</taxon>
        <taxon>Camelineae</taxon>
        <taxon>Arabidopsis</taxon>
    </lineage>
</organism>
<accession>P56779</accession>
<accession>Q8HS06</accession>
<protein>
    <recommendedName>
        <fullName evidence="1">Cytochrome b559 subunit alpha</fullName>
    </recommendedName>
    <alternativeName>
        <fullName evidence="1">PSII reaction center subunit V</fullName>
    </alternativeName>
</protein>
<proteinExistence type="evidence at protein level"/>
<feature type="chain" id="PRO_0000200298" description="Cytochrome b559 subunit alpha">
    <location>
        <begin position="1"/>
        <end position="83"/>
    </location>
</feature>
<feature type="transmembrane region" description="Helical" evidence="1">
    <location>
        <begin position="21"/>
        <end position="35"/>
    </location>
</feature>
<feature type="binding site" description="axial binding residue" evidence="1">
    <location>
        <position position="23"/>
    </location>
    <ligand>
        <name>heme</name>
        <dbReference type="ChEBI" id="CHEBI:30413"/>
        <note>ligand shared with beta subunit</note>
    </ligand>
    <ligandPart>
        <name>Fe</name>
        <dbReference type="ChEBI" id="CHEBI:18248"/>
    </ligandPart>
</feature>
<feature type="turn" evidence="3">
    <location>
        <begin position="19"/>
        <end position="21"/>
    </location>
</feature>
<feature type="helix" evidence="3">
    <location>
        <begin position="22"/>
        <end position="39"/>
    </location>
</feature>
<feature type="helix" evidence="3">
    <location>
        <begin position="42"/>
        <end position="47"/>
    </location>
</feature>
<feature type="strand" evidence="3">
    <location>
        <begin position="69"/>
        <end position="71"/>
    </location>
</feature>
<feature type="helix" evidence="3">
    <location>
        <begin position="72"/>
        <end position="81"/>
    </location>
</feature>
<comment type="function">
    <text evidence="1">This b-type cytochrome is tightly associated with the reaction center of photosystem II (PSII). PSII is a light-driven water:plastoquinone oxidoreductase that uses light energy to abstract electrons from H(2)O, generating O(2) and a proton gradient subsequently used for ATP formation. It consists of a core antenna complex that captures photons, and an electron transfer chain that converts photonic excitation into a charge separation.</text>
</comment>
<comment type="cofactor">
    <cofactor evidence="1">
        <name>heme b</name>
        <dbReference type="ChEBI" id="CHEBI:60344"/>
    </cofactor>
    <text evidence="1">With its partner (PsbF) binds heme. PSII binds additional chlorophylls, carotenoids and specific lipids.</text>
</comment>
<comment type="subunit">
    <text evidence="1">Heterodimer of an alpha subunit and a beta subunit. PSII is composed of 1 copy each of membrane proteins PsbA, PsbB, PsbC, PsbD, PsbE, PsbF, PsbH, PsbI, PsbJ, PsbK, PsbL, PsbM, PsbT, PsbX, PsbY, PsbZ, Psb30/Ycf12, at least 3 peripheral proteins of the oxygen-evolving complex and a large number of cofactors. It forms dimeric complexes.</text>
</comment>
<comment type="subcellular location">
    <subcellularLocation>
        <location evidence="1">Plastid</location>
        <location evidence="1">Chloroplast thylakoid membrane</location>
        <topology evidence="1">Single-pass membrane protein</topology>
    </subcellularLocation>
</comment>
<comment type="RNA editing">
    <location>
        <position position="72" evidence="2"/>
    </location>
</comment>
<comment type="similarity">
    <text evidence="1">Belongs to the PsbE/PsbF family.</text>
</comment>
<keyword id="KW-0002">3D-structure</keyword>
<keyword id="KW-0150">Chloroplast</keyword>
<keyword id="KW-0249">Electron transport</keyword>
<keyword id="KW-0349">Heme</keyword>
<keyword id="KW-0408">Iron</keyword>
<keyword id="KW-0472">Membrane</keyword>
<keyword id="KW-0479">Metal-binding</keyword>
<keyword id="KW-0602">Photosynthesis</keyword>
<keyword id="KW-0604">Photosystem II</keyword>
<keyword id="KW-0934">Plastid</keyword>
<keyword id="KW-1185">Reference proteome</keyword>
<keyword id="KW-0691">RNA editing</keyword>
<keyword id="KW-0793">Thylakoid</keyword>
<keyword id="KW-0812">Transmembrane</keyword>
<keyword id="KW-1133">Transmembrane helix</keyword>
<keyword id="KW-0813">Transport</keyword>
<name>PSBE_ARATH</name>
<evidence type="ECO:0000255" key="1">
    <source>
        <dbReference type="HAMAP-Rule" id="MF_00642"/>
    </source>
</evidence>
<evidence type="ECO:0000269" key="2">
    <source ref="5"/>
</evidence>
<evidence type="ECO:0007829" key="3">
    <source>
        <dbReference type="PDB" id="7OUI"/>
    </source>
</evidence>
<dbReference type="EMBL" id="AP000423">
    <property type="protein sequence ID" value="BAA84402.1"/>
    <property type="status" value="ALT_SEQ"/>
    <property type="molecule type" value="Genomic_DNA"/>
</dbReference>
<dbReference type="EMBL" id="AV525419">
    <property type="status" value="NOT_ANNOTATED_CDS"/>
    <property type="molecule type" value="mRNA"/>
</dbReference>
<dbReference type="EMBL" id="AV527712">
    <property type="status" value="NOT_ANNOTATED_CDS"/>
    <property type="molecule type" value="mRNA"/>
</dbReference>
<dbReference type="EMBL" id="BE525291">
    <property type="status" value="NOT_ANNOTATED_CDS"/>
    <property type="molecule type" value="mRNA"/>
</dbReference>
<dbReference type="EMBL" id="AY007473">
    <property type="protein sequence ID" value="AAG26974.1"/>
    <property type="status" value="ALT_SEQ"/>
    <property type="molecule type" value="Genomic_DNA"/>
</dbReference>
<dbReference type="RefSeq" id="NP_051076.1">
    <property type="nucleotide sequence ID" value="NC_000932.1"/>
</dbReference>
<dbReference type="PDB" id="5MDX">
    <property type="method" value="EM"/>
    <property type="resolution" value="5.30 A"/>
    <property type="chains" value="E/e=1-83"/>
</dbReference>
<dbReference type="PDB" id="7OUI">
    <property type="method" value="EM"/>
    <property type="resolution" value="2.79 A"/>
    <property type="chains" value="E/e=1-83"/>
</dbReference>
<dbReference type="PDBsum" id="5MDX"/>
<dbReference type="PDBsum" id="7OUI"/>
<dbReference type="EMDB" id="EMD-13078"/>
<dbReference type="EMDB" id="EMD-3491"/>
<dbReference type="SMR" id="P56779"/>
<dbReference type="BioGRID" id="29949">
    <property type="interactions" value="23"/>
</dbReference>
<dbReference type="FunCoup" id="P56779">
    <property type="interactions" value="18"/>
</dbReference>
<dbReference type="IntAct" id="P56779">
    <property type="interactions" value="1"/>
</dbReference>
<dbReference type="STRING" id="3702.P56779"/>
<dbReference type="PaxDb" id="3702-ATCG00580.1"/>
<dbReference type="ProteomicsDB" id="226168"/>
<dbReference type="GeneID" id="844745"/>
<dbReference type="KEGG" id="ath:ArthCp039"/>
<dbReference type="Araport" id="ATCG00580"/>
<dbReference type="TAIR" id="ATCG00580">
    <property type="gene designation" value="PSBE"/>
</dbReference>
<dbReference type="eggNOG" id="ENOG502S3QA">
    <property type="taxonomic scope" value="Eukaryota"/>
</dbReference>
<dbReference type="HOGENOM" id="CLU_194095_0_0_1"/>
<dbReference type="InParanoid" id="P56779"/>
<dbReference type="BioCyc" id="MetaCyc:ATCG00580-MONOMER"/>
<dbReference type="PRO" id="PR:P56779"/>
<dbReference type="Proteomes" id="UP000006548">
    <property type="component" value="Chloroplast Pltd"/>
</dbReference>
<dbReference type="ExpressionAtlas" id="P56779">
    <property type="expression patterns" value="baseline and differential"/>
</dbReference>
<dbReference type="GO" id="GO:0009535">
    <property type="term" value="C:chloroplast thylakoid membrane"/>
    <property type="evidence" value="ECO:0007669"/>
    <property type="project" value="UniProtKB-SubCell"/>
</dbReference>
<dbReference type="GO" id="GO:0009539">
    <property type="term" value="C:photosystem II reaction center"/>
    <property type="evidence" value="ECO:0007669"/>
    <property type="project" value="InterPro"/>
</dbReference>
<dbReference type="GO" id="GO:0009055">
    <property type="term" value="F:electron transfer activity"/>
    <property type="evidence" value="ECO:0007669"/>
    <property type="project" value="UniProtKB-UniRule"/>
</dbReference>
<dbReference type="GO" id="GO:0020037">
    <property type="term" value="F:heme binding"/>
    <property type="evidence" value="ECO:0007669"/>
    <property type="project" value="InterPro"/>
</dbReference>
<dbReference type="GO" id="GO:0005506">
    <property type="term" value="F:iron ion binding"/>
    <property type="evidence" value="ECO:0007669"/>
    <property type="project" value="UniProtKB-UniRule"/>
</dbReference>
<dbReference type="GO" id="GO:0009767">
    <property type="term" value="P:photosynthetic electron transport chain"/>
    <property type="evidence" value="ECO:0007669"/>
    <property type="project" value="InterPro"/>
</dbReference>
<dbReference type="Gene3D" id="1.20.5.860">
    <property type="entry name" value="Photosystem II cytochrome b559, alpha subunit"/>
    <property type="match status" value="1"/>
</dbReference>
<dbReference type="HAMAP" id="MF_00642">
    <property type="entry name" value="PSII_PsbE"/>
    <property type="match status" value="1"/>
</dbReference>
<dbReference type="InterPro" id="IPR006217">
    <property type="entry name" value="PSII_cyt_b559_asu"/>
</dbReference>
<dbReference type="InterPro" id="IPR037025">
    <property type="entry name" value="PSII_cyt_b559_asu_sf"/>
</dbReference>
<dbReference type="InterPro" id="IPR006216">
    <property type="entry name" value="PSII_cyt_b559_CS"/>
</dbReference>
<dbReference type="InterPro" id="IPR013081">
    <property type="entry name" value="PSII_cyt_b559_N"/>
</dbReference>
<dbReference type="InterPro" id="IPR013082">
    <property type="entry name" value="PSII_cytb559_asu_lum"/>
</dbReference>
<dbReference type="NCBIfam" id="TIGR01332">
    <property type="entry name" value="cyt_b559_alpha"/>
    <property type="match status" value="1"/>
</dbReference>
<dbReference type="PANTHER" id="PTHR33391">
    <property type="entry name" value="CYTOCHROME B559 SUBUNIT BETA-RELATED"/>
    <property type="match status" value="1"/>
</dbReference>
<dbReference type="PANTHER" id="PTHR33391:SF9">
    <property type="entry name" value="CYTOCHROME B559 SUBUNIT BETA-RELATED"/>
    <property type="match status" value="1"/>
</dbReference>
<dbReference type="Pfam" id="PF00283">
    <property type="entry name" value="Cytochrom_B559"/>
    <property type="match status" value="1"/>
</dbReference>
<dbReference type="Pfam" id="PF00284">
    <property type="entry name" value="Cytochrom_B559a"/>
    <property type="match status" value="1"/>
</dbReference>
<dbReference type="PIRSF" id="PIRSF000036">
    <property type="entry name" value="PsbE"/>
    <property type="match status" value="1"/>
</dbReference>
<dbReference type="SUPFAM" id="SSF161045">
    <property type="entry name" value="Cytochrome b559 subunits"/>
    <property type="match status" value="1"/>
</dbReference>
<dbReference type="PROSITE" id="PS00537">
    <property type="entry name" value="CYTOCHROME_B559"/>
    <property type="match status" value="1"/>
</dbReference>
<gene>
    <name evidence="1" type="primary">psbE</name>
    <name type="ordered locus">AtCg00580</name>
</gene>
<reference key="1">
    <citation type="journal article" date="1999" name="DNA Res.">
        <title>Complete structure of the chloroplast genome of Arabidopsis thaliana.</title>
        <authorList>
            <person name="Sato S."/>
            <person name="Nakamura Y."/>
            <person name="Kaneko T."/>
            <person name="Asamizu E."/>
            <person name="Tabata S."/>
        </authorList>
    </citation>
    <scope>NUCLEOTIDE SEQUENCE [LARGE SCALE GENOMIC DNA]</scope>
    <source>
        <strain>cv. Columbia</strain>
    </source>
</reference>
<reference key="2">
    <citation type="journal article" date="2000" name="DNA Res.">
        <title>A large scale analysis of cDNA in Arabidopsis thaliana: generation of 12,028 non-redundant expressed sequence tags from normalized and size-selected cDNA libraries.</title>
        <authorList>
            <person name="Asamizu E."/>
            <person name="Nakamura Y."/>
            <person name="Sato S."/>
            <person name="Tabata S."/>
        </authorList>
    </citation>
    <scope>NUCLEOTIDE SEQUENCE [MRNA]</scope>
</reference>
<reference key="3">
    <citation type="journal article" date="2000" name="Plant Physiol.">
        <title>A new set of Arabidopsis expressed sequence tags from developing seeds. The metabolic pathway from carbohydrates to seed oil.</title>
        <authorList>
            <person name="White J.A."/>
            <person name="Todd J."/>
            <person name="Newman T."/>
            <person name="Focks N."/>
            <person name="Girke T."/>
            <person name="de Ilarduya O.M."/>
            <person name="Jaworski J.G."/>
            <person name="Ohlrogge J.B."/>
            <person name="Benning C."/>
        </authorList>
    </citation>
    <scope>NUCLEOTIDE SEQUENCE [MRNA] OF 1-79</scope>
</reference>
<reference key="4">
    <citation type="submission" date="2000-02" db="EMBL/GenBank/DDBJ databases">
        <title>Long branches in the seed plants and the root of the angiosperms.</title>
        <authorList>
            <person name="Graham S.W."/>
            <person name="Reeves P.A."/>
            <person name="Burns A."/>
            <person name="Olmstead R.G."/>
        </authorList>
    </citation>
    <scope>NUCLEOTIDE SEQUENCE [GENOMIC DNA] OF 9-83</scope>
</reference>
<reference key="5">
    <citation type="unpublished observations" date="2006-08">
        <authorList>
            <person name="Battchikova N."/>
        </authorList>
    </citation>
    <scope>IDENTIFICATION BY MASS SPECTROMETRY</scope>
    <scope>RNA EDITING</scope>
</reference>
<geneLocation type="chloroplast"/>